<dbReference type="EMBL" id="L26406">
    <property type="protein sequence ID" value="AAB46932.1"/>
    <property type="molecule type" value="Genomic_DNA"/>
</dbReference>
<dbReference type="EMBL" id="CP001510">
    <property type="protein sequence ID" value="ACS40527.1"/>
    <property type="molecule type" value="Genomic_DNA"/>
</dbReference>
<dbReference type="RefSeq" id="WP_012753042.1">
    <property type="nucleotide sequence ID" value="NC_012808.1"/>
</dbReference>
<dbReference type="STRING" id="272630.MexAM1_META1p2769"/>
<dbReference type="KEGG" id="mea:Mex_1p2769"/>
<dbReference type="eggNOG" id="COG0785">
    <property type="taxonomic scope" value="Bacteria"/>
</dbReference>
<dbReference type="HOGENOM" id="CLU_059532_0_0_5"/>
<dbReference type="OrthoDB" id="7931642at2"/>
<dbReference type="UniPathway" id="UPA00895"/>
<dbReference type="Proteomes" id="UP000009081">
    <property type="component" value="Chromosome"/>
</dbReference>
<dbReference type="GO" id="GO:0005886">
    <property type="term" value="C:plasma membrane"/>
    <property type="evidence" value="ECO:0007669"/>
    <property type="project" value="UniProtKB-SubCell"/>
</dbReference>
<gene>
    <name type="primary">mauF</name>
    <name type="ordered locus">MexAM1_META1p2769</name>
</gene>
<protein>
    <recommendedName>
        <fullName>Methylamine utilization protein MauF</fullName>
    </recommendedName>
</protein>
<keyword id="KW-1003">Cell membrane</keyword>
<keyword id="KW-0472">Membrane</keyword>
<keyword id="KW-1185">Reference proteome</keyword>
<keyword id="KW-0812">Transmembrane</keyword>
<keyword id="KW-1133">Transmembrane helix</keyword>
<comment type="pathway">
    <text>One-carbon metabolism; methylamine degradation.</text>
</comment>
<comment type="subcellular location">
    <subcellularLocation>
        <location evidence="2">Cell membrane</location>
        <topology evidence="2">Multi-pass membrane protein</topology>
    </subcellularLocation>
</comment>
<reference key="1">
    <citation type="journal article" date="1994" name="J. Bacteriol.">
        <title>Genetic organization of the mau gene cluster in Methylobacterium extorquens AM1: complete nucleotide sequence and generation and characteristics of mau mutants.</title>
        <authorList>
            <person name="Chistoserdov A.Y."/>
            <person name="Chistoserdova L.V."/>
            <person name="McIntire W.S."/>
            <person name="Lidstrom M.E."/>
        </authorList>
    </citation>
    <scope>NUCLEOTIDE SEQUENCE [GENOMIC DNA]</scope>
</reference>
<reference key="2">
    <citation type="journal article" date="2009" name="PLoS ONE">
        <title>Methylobacterium genome sequences: a reference blueprint to investigate microbial metabolism of C1 compounds from natural and industrial sources.</title>
        <authorList>
            <person name="Vuilleumier S."/>
            <person name="Chistoserdova L."/>
            <person name="Lee M.-C."/>
            <person name="Bringel F."/>
            <person name="Lajus A."/>
            <person name="Zhou Y."/>
            <person name="Gourion B."/>
            <person name="Barbe V."/>
            <person name="Chang J."/>
            <person name="Cruveiller S."/>
            <person name="Dossat C."/>
            <person name="Gillett W."/>
            <person name="Gruffaz C."/>
            <person name="Haugen E."/>
            <person name="Hourcade E."/>
            <person name="Levy R."/>
            <person name="Mangenot S."/>
            <person name="Muller E."/>
            <person name="Nadalig T."/>
            <person name="Pagni M."/>
            <person name="Penny C."/>
            <person name="Peyraud R."/>
            <person name="Robinson D.G."/>
            <person name="Roche D."/>
            <person name="Rouy Z."/>
            <person name="Saenampechek C."/>
            <person name="Salvignol G."/>
            <person name="Vallenet D."/>
            <person name="Wu Z."/>
            <person name="Marx C.J."/>
            <person name="Vorholt J.A."/>
            <person name="Olson M.V."/>
            <person name="Kaul R."/>
            <person name="Weissenbach J."/>
            <person name="Medigue C."/>
            <person name="Lidstrom M.E."/>
        </authorList>
    </citation>
    <scope>NUCLEOTIDE SEQUENCE [LARGE SCALE GENOMIC DNA]</scope>
    <source>
        <strain>ATCC 14718 / DSM 1338 / JCM 2805 / NCIMB 9133 / AM1</strain>
    </source>
</reference>
<accession>Q49123</accession>
<accession>C5ATK3</accession>
<feature type="chain" id="PRO_0000208937" description="Methylamine utilization protein MauF">
    <location>
        <begin position="1"/>
        <end position="285"/>
    </location>
</feature>
<feature type="transmembrane region" description="Helical" evidence="1">
    <location>
        <begin position="39"/>
        <end position="59"/>
    </location>
</feature>
<feature type="transmembrane region" description="Helical" evidence="1">
    <location>
        <begin position="63"/>
        <end position="83"/>
    </location>
</feature>
<feature type="transmembrane region" description="Helical" evidence="1">
    <location>
        <begin position="120"/>
        <end position="140"/>
    </location>
</feature>
<feature type="transmembrane region" description="Helical" evidence="1">
    <location>
        <begin position="144"/>
        <end position="164"/>
    </location>
</feature>
<feature type="transmembrane region" description="Helical" evidence="1">
    <location>
        <begin position="184"/>
        <end position="204"/>
    </location>
</feature>
<feature type="transmembrane region" description="Helical" evidence="1">
    <location>
        <begin position="209"/>
        <end position="229"/>
    </location>
</feature>
<feature type="transmembrane region" description="Helical" evidence="1">
    <location>
        <begin position="265"/>
        <end position="285"/>
    </location>
</feature>
<name>MAUF_METEA</name>
<proteinExistence type="predicted"/>
<organism>
    <name type="scientific">Methylorubrum extorquens (strain ATCC 14718 / DSM 1338 / JCM 2805 / NCIMB 9133 / AM1)</name>
    <name type="common">Methylobacterium extorquens</name>
    <dbReference type="NCBI Taxonomy" id="272630"/>
    <lineage>
        <taxon>Bacteria</taxon>
        <taxon>Pseudomonadati</taxon>
        <taxon>Pseudomonadota</taxon>
        <taxon>Alphaproteobacteria</taxon>
        <taxon>Hyphomicrobiales</taxon>
        <taxon>Methylobacteriaceae</taxon>
        <taxon>Methylorubrum</taxon>
    </lineage>
</organism>
<evidence type="ECO:0000255" key="1"/>
<evidence type="ECO:0000305" key="2"/>
<sequence>MPTLTPPAGSEVIPFASVHTERVEDCLVFPSELSTKVRLGGLVTAVSGGILGAALLSQTSSQGVAVPALLMGLSFVGGLLSTWSPCGYSSLCLLRPVGPYSARSLVKYTPTFLLHGIGYAVGALILGCVLGIAGGLLGFGGVSFGALAGLGAAGIIYGAHQLGFLRVPYPQRRAQVPHDARQRFPVWFIGGLYGLSLGLNYLTYVQTPILYLVTAAAVLSSNIGAAILLFAAFNAGRFLPMAVNYLPVSDITVQNWLARRQEGAALLDGVLLVAGGAALLTFAAL</sequence>